<protein>
    <recommendedName>
        <fullName evidence="1">Regulatory protein E2</fullName>
    </recommendedName>
</protein>
<dbReference type="EMBL" id="X55965">
    <property type="protein sequence ID" value="CAA39433.1"/>
    <property type="molecule type" value="Genomic_DNA"/>
</dbReference>
<dbReference type="PIR" id="S15624">
    <property type="entry name" value="S15624"/>
</dbReference>
<dbReference type="SMR" id="P22155"/>
<dbReference type="Proteomes" id="UP000007667">
    <property type="component" value="Genome"/>
</dbReference>
<dbReference type="GO" id="GO:0042025">
    <property type="term" value="C:host cell nucleus"/>
    <property type="evidence" value="ECO:0007669"/>
    <property type="project" value="UniProtKB-SubCell"/>
</dbReference>
<dbReference type="GO" id="GO:0003677">
    <property type="term" value="F:DNA binding"/>
    <property type="evidence" value="ECO:0007669"/>
    <property type="project" value="UniProtKB-UniRule"/>
</dbReference>
<dbReference type="GO" id="GO:0003700">
    <property type="term" value="F:DNA-binding transcription factor activity"/>
    <property type="evidence" value="ECO:0007669"/>
    <property type="project" value="UniProtKB-UniRule"/>
</dbReference>
<dbReference type="GO" id="GO:0000166">
    <property type="term" value="F:nucleotide binding"/>
    <property type="evidence" value="ECO:0007669"/>
    <property type="project" value="UniProtKB-UniRule"/>
</dbReference>
<dbReference type="GO" id="GO:0006260">
    <property type="term" value="P:DNA replication"/>
    <property type="evidence" value="ECO:0007669"/>
    <property type="project" value="UniProtKB-KW"/>
</dbReference>
<dbReference type="GO" id="GO:0006351">
    <property type="term" value="P:DNA-templated transcription"/>
    <property type="evidence" value="ECO:0007669"/>
    <property type="project" value="UniProtKB-UniRule"/>
</dbReference>
<dbReference type="GO" id="GO:0006275">
    <property type="term" value="P:regulation of DNA replication"/>
    <property type="evidence" value="ECO:0007669"/>
    <property type="project" value="UniProtKB-UniRule"/>
</dbReference>
<dbReference type="GO" id="GO:0039693">
    <property type="term" value="P:viral DNA genome replication"/>
    <property type="evidence" value="ECO:0007669"/>
    <property type="project" value="UniProtKB-UniRule"/>
</dbReference>
<dbReference type="Gene3D" id="3.30.70.330">
    <property type="match status" value="1"/>
</dbReference>
<dbReference type="Gene3D" id="1.10.287.30">
    <property type="entry name" value="E2 (early) protein, N terminal domain, subdomain 1"/>
    <property type="match status" value="1"/>
</dbReference>
<dbReference type="Gene3D" id="2.170.200.10">
    <property type="entry name" value="Papillomavirus E2 early protein domain"/>
    <property type="match status" value="1"/>
</dbReference>
<dbReference type="HAMAP" id="MF_04001">
    <property type="entry name" value="PPV_E2"/>
    <property type="match status" value="1"/>
</dbReference>
<dbReference type="InterPro" id="IPR035975">
    <property type="entry name" value="E2/EBNA1_C_sf"/>
</dbReference>
<dbReference type="InterPro" id="IPR012677">
    <property type="entry name" value="Nucleotide-bd_a/b_plait_sf"/>
</dbReference>
<dbReference type="InterPro" id="IPR000427">
    <property type="entry name" value="Papillomavirus_E2_C"/>
</dbReference>
<dbReference type="InterPro" id="IPR001866">
    <property type="entry name" value="PPV_E2_N"/>
</dbReference>
<dbReference type="InterPro" id="IPR033668">
    <property type="entry name" value="Reg_prot_E2"/>
</dbReference>
<dbReference type="InterPro" id="IPR036050">
    <property type="entry name" value="Regulatory_protein_E2_N"/>
</dbReference>
<dbReference type="InterPro" id="IPR042503">
    <property type="entry name" value="Regulatory_protein_E2_N_1"/>
</dbReference>
<dbReference type="InterPro" id="IPR042504">
    <property type="entry name" value="Regulatory_protein_E2_N_2"/>
</dbReference>
<dbReference type="Pfam" id="PF00511">
    <property type="entry name" value="PPV_E2_C"/>
    <property type="match status" value="1"/>
</dbReference>
<dbReference type="Pfam" id="PF00508">
    <property type="entry name" value="PPV_E2_N"/>
    <property type="match status" value="1"/>
</dbReference>
<dbReference type="SUPFAM" id="SSF51332">
    <property type="entry name" value="E2 regulatory, transactivation domain"/>
    <property type="match status" value="1"/>
</dbReference>
<dbReference type="SUPFAM" id="SSF54957">
    <property type="entry name" value="Viral DNA-binding domain"/>
    <property type="match status" value="1"/>
</dbReference>
<gene>
    <name evidence="1" type="primary">E2</name>
</gene>
<feature type="chain" id="PRO_0000133235" description="Regulatory protein E2">
    <location>
        <begin position="1"/>
        <end position="383"/>
    </location>
</feature>
<feature type="region of interest" description="Transactivation domain" evidence="1">
    <location>
        <begin position="1"/>
        <end position="202"/>
    </location>
</feature>
<feature type="region of interest" description="Disordered" evidence="2">
    <location>
        <begin position="233"/>
        <end position="297"/>
    </location>
</feature>
<feature type="region of interest" description="DNA-binding domain" evidence="1">
    <location>
        <begin position="303"/>
        <end position="383"/>
    </location>
</feature>
<feature type="compositionally biased region" description="Basic and acidic residues" evidence="2">
    <location>
        <begin position="267"/>
        <end position="297"/>
    </location>
</feature>
<organism>
    <name type="scientific">Human papillomavirus 57</name>
    <dbReference type="NCBI Taxonomy" id="333753"/>
    <lineage>
        <taxon>Viruses</taxon>
        <taxon>Monodnaviria</taxon>
        <taxon>Shotokuvirae</taxon>
        <taxon>Cossaviricota</taxon>
        <taxon>Papovaviricetes</taxon>
        <taxon>Zurhausenvirales</taxon>
        <taxon>Papillomaviridae</taxon>
        <taxon>Firstpapillomavirinae</taxon>
        <taxon>Alphapapillomavirus</taxon>
        <taxon>Alphapapillomavirus 4</taxon>
    </lineage>
</organism>
<sequence length="383" mass="42830">METLASRLDACQETLLELYEKDSNKLEDQIKHWAQVRLENVMLFKARECGMTRVGCTTVPALTVSKAKACQAIEVQLALQTLMQSAYSTEAWTLRDTCLEMWEAPPKRCWKKKGQSVLVKFDGSCDRDMIYTGWGHIYVQDINDDTWHKVPGQVDELGLFYVHDGVRVNYVDFGIEALTYGVTGTWEVQVGGRVIYHTSASVSSTQAATSDDDTLSPLRSAAAAVTATATATTAVPPTLQDSAQAPSSPPPKRQRVIVGQQWQQPDSTRKVREGQVECQNDRSIRNPDSTDPRRGHSDLDAVPVIHLQGEANCLKCFRYRVQKHKDVLFVKASSTWHWACGNGDKTAFVTLWYKSQEQRAEFLTRVHLPKGVKALPGYMSAFV</sequence>
<evidence type="ECO:0000255" key="1">
    <source>
        <dbReference type="HAMAP-Rule" id="MF_04001"/>
    </source>
</evidence>
<evidence type="ECO:0000256" key="2">
    <source>
        <dbReference type="SAM" id="MobiDB-lite"/>
    </source>
</evidence>
<name>VE2_HPV57</name>
<organismHost>
    <name type="scientific">Homo sapiens</name>
    <name type="common">Human</name>
    <dbReference type="NCBI Taxonomy" id="9606"/>
</organismHost>
<proteinExistence type="inferred from homology"/>
<accession>P22155</accession>
<keyword id="KW-0010">Activator</keyword>
<keyword id="KW-0235">DNA replication</keyword>
<keyword id="KW-0238">DNA-binding</keyword>
<keyword id="KW-0244">Early protein</keyword>
<keyword id="KW-1048">Host nucleus</keyword>
<keyword id="KW-0597">Phosphoprotein</keyword>
<keyword id="KW-0678">Repressor</keyword>
<keyword id="KW-0804">Transcription</keyword>
<keyword id="KW-0805">Transcription regulation</keyword>
<comment type="function">
    <text evidence="1">Plays a role in the initiation of viral DNA replication. A dimer of E2 interacts with a dimer of E1 in order to improve specificity of E1 DNA binding activity. Once the complex recognizes and binds DNA at specific sites, the E2 dimer is removed from DNA. E2 also regulates viral transcription through binding to the E2RE response element (5'-ACCNNNNNNGGT-3') present in multiple copies in the regulatory regions of the viral genome. Activates or represses transcription depending on E2RE's position with regards to proximal promoter elements including the TATA-box. Repression occurs by sterically hindering the assembly of the transcription initiation complex.</text>
</comment>
<comment type="subunit">
    <text evidence="1">Binds DNA as homodimer. Interacts with protein E1; this interaction greatly increases E1 DNA-binding activity. Interacts with protein L1; this interaction enhances E2-dependent replication and transcription activation. Interacts with protein L2; this interaction inhibits E2 transcriptional activity but not DNA replication function E2. Interacts with protein E7; this interaction inhibits E7 oncogenic activity. Interacts with host TAF1; this interaction modulates E2-dependent transcriptional regulation. Interacts with host BRD4; this interaction mediates E2 transcriptional activation function. Additionally, the interaction with host BRD4 on mitotic chromosomes mediates tethering of the viral genome. Interacts with host TOPBP1; this interaction is required for optimal viral DNA replication.</text>
</comment>
<comment type="subcellular location">
    <subcellularLocation>
        <location evidence="1">Host nucleus</location>
    </subcellularLocation>
</comment>
<comment type="PTM">
    <text evidence="1">Phosphorylated.</text>
</comment>
<comment type="similarity">
    <text evidence="1">Belongs to the papillomaviridae E2 protein family.</text>
</comment>
<reference key="1">
    <citation type="journal article" date="1990" name="Virus Res.">
        <title>A comparative sequence analysis of two human papillomavirus (HPV) types 2a and 57.</title>
        <authorList>
            <person name="Hirsch-Behnam A."/>
            <person name="Delius H."/>
            <person name="de Villiers E.M."/>
        </authorList>
    </citation>
    <scope>NUCLEOTIDE SEQUENCE [GENOMIC DNA]</scope>
</reference>